<dbReference type="EC" id="2.7.7.6" evidence="1"/>
<dbReference type="EMBL" id="CP000878">
    <property type="protein sequence ID" value="ABX09537.1"/>
    <property type="molecule type" value="Genomic_DNA"/>
</dbReference>
<dbReference type="RefSeq" id="WP_012196158.1">
    <property type="nucleotide sequence ID" value="NC_009976.1"/>
</dbReference>
<dbReference type="SMR" id="A9BCH5"/>
<dbReference type="STRING" id="93059.P9211_16061"/>
<dbReference type="KEGG" id="pmj:P9211_16061"/>
<dbReference type="eggNOG" id="COG0086">
    <property type="taxonomic scope" value="Bacteria"/>
</dbReference>
<dbReference type="HOGENOM" id="CLU_030022_2_0_3"/>
<dbReference type="OrthoDB" id="9815296at2"/>
<dbReference type="Proteomes" id="UP000000788">
    <property type="component" value="Chromosome"/>
</dbReference>
<dbReference type="GO" id="GO:0000428">
    <property type="term" value="C:DNA-directed RNA polymerase complex"/>
    <property type="evidence" value="ECO:0007669"/>
    <property type="project" value="UniProtKB-KW"/>
</dbReference>
<dbReference type="GO" id="GO:0003677">
    <property type="term" value="F:DNA binding"/>
    <property type="evidence" value="ECO:0007669"/>
    <property type="project" value="UniProtKB-UniRule"/>
</dbReference>
<dbReference type="GO" id="GO:0003899">
    <property type="term" value="F:DNA-directed RNA polymerase activity"/>
    <property type="evidence" value="ECO:0007669"/>
    <property type="project" value="UniProtKB-UniRule"/>
</dbReference>
<dbReference type="GO" id="GO:0000287">
    <property type="term" value="F:magnesium ion binding"/>
    <property type="evidence" value="ECO:0007669"/>
    <property type="project" value="UniProtKB-UniRule"/>
</dbReference>
<dbReference type="GO" id="GO:0008270">
    <property type="term" value="F:zinc ion binding"/>
    <property type="evidence" value="ECO:0007669"/>
    <property type="project" value="UniProtKB-UniRule"/>
</dbReference>
<dbReference type="GO" id="GO:0006351">
    <property type="term" value="P:DNA-templated transcription"/>
    <property type="evidence" value="ECO:0007669"/>
    <property type="project" value="UniProtKB-UniRule"/>
</dbReference>
<dbReference type="Gene3D" id="1.10.40.90">
    <property type="match status" value="1"/>
</dbReference>
<dbReference type="Gene3D" id="2.40.40.20">
    <property type="match status" value="1"/>
</dbReference>
<dbReference type="Gene3D" id="4.10.860.120">
    <property type="entry name" value="RNA polymerase II, clamp domain"/>
    <property type="match status" value="1"/>
</dbReference>
<dbReference type="Gene3D" id="1.10.274.100">
    <property type="entry name" value="RNA polymerase Rpb1, domain 3"/>
    <property type="match status" value="1"/>
</dbReference>
<dbReference type="HAMAP" id="MF_01323">
    <property type="entry name" value="RNApol_bact_RpoC1"/>
    <property type="match status" value="1"/>
</dbReference>
<dbReference type="InterPro" id="IPR012755">
    <property type="entry name" value="DNA-dir_RpoC1_gamma"/>
</dbReference>
<dbReference type="InterPro" id="IPR045867">
    <property type="entry name" value="DNA-dir_RpoC_beta_prime"/>
</dbReference>
<dbReference type="InterPro" id="IPR000722">
    <property type="entry name" value="RNA_pol_asu"/>
</dbReference>
<dbReference type="InterPro" id="IPR006592">
    <property type="entry name" value="RNA_pol_N"/>
</dbReference>
<dbReference type="InterPro" id="IPR007080">
    <property type="entry name" value="RNA_pol_Rpb1_1"/>
</dbReference>
<dbReference type="InterPro" id="IPR007066">
    <property type="entry name" value="RNA_pol_Rpb1_3"/>
</dbReference>
<dbReference type="InterPro" id="IPR042102">
    <property type="entry name" value="RNA_pol_Rpb1_3_sf"/>
</dbReference>
<dbReference type="InterPro" id="IPR044893">
    <property type="entry name" value="RNA_pol_Rpb1_clamp_domain"/>
</dbReference>
<dbReference type="InterPro" id="IPR034678">
    <property type="entry name" value="RNApol_RpoC1"/>
</dbReference>
<dbReference type="NCBIfam" id="NF002729">
    <property type="entry name" value="PRK02625.1"/>
    <property type="match status" value="1"/>
</dbReference>
<dbReference type="NCBIfam" id="TIGR02387">
    <property type="entry name" value="rpoC1_cyan"/>
    <property type="match status" value="1"/>
</dbReference>
<dbReference type="PANTHER" id="PTHR19376">
    <property type="entry name" value="DNA-DIRECTED RNA POLYMERASE"/>
    <property type="match status" value="1"/>
</dbReference>
<dbReference type="PANTHER" id="PTHR19376:SF54">
    <property type="entry name" value="DNA-DIRECTED RNA POLYMERASE SUBUNIT BETA"/>
    <property type="match status" value="1"/>
</dbReference>
<dbReference type="Pfam" id="PF04997">
    <property type="entry name" value="RNA_pol_Rpb1_1"/>
    <property type="match status" value="1"/>
</dbReference>
<dbReference type="Pfam" id="PF00623">
    <property type="entry name" value="RNA_pol_Rpb1_2"/>
    <property type="match status" value="1"/>
</dbReference>
<dbReference type="Pfam" id="PF04983">
    <property type="entry name" value="RNA_pol_Rpb1_3"/>
    <property type="match status" value="1"/>
</dbReference>
<dbReference type="SMART" id="SM00663">
    <property type="entry name" value="RPOLA_N"/>
    <property type="match status" value="1"/>
</dbReference>
<dbReference type="SUPFAM" id="SSF64484">
    <property type="entry name" value="beta and beta-prime subunits of DNA dependent RNA-polymerase"/>
    <property type="match status" value="1"/>
</dbReference>
<gene>
    <name evidence="1" type="primary">rpoC1</name>
    <name type="ordered locus">P9211_16061</name>
</gene>
<proteinExistence type="inferred from homology"/>
<protein>
    <recommendedName>
        <fullName evidence="1">DNA-directed RNA polymerase subunit gamma</fullName>
        <shortName evidence="1">RNAP subunit gamma</shortName>
        <ecNumber evidence="1">2.7.7.6</ecNumber>
    </recommendedName>
    <alternativeName>
        <fullName evidence="1">RNA polymerase subunit gamma</fullName>
    </alternativeName>
    <alternativeName>
        <fullName evidence="1">Transcriptase subunit gamma</fullName>
    </alternativeName>
</protein>
<keyword id="KW-0240">DNA-directed RNA polymerase</keyword>
<keyword id="KW-0460">Magnesium</keyword>
<keyword id="KW-0479">Metal-binding</keyword>
<keyword id="KW-0548">Nucleotidyltransferase</keyword>
<keyword id="KW-1185">Reference proteome</keyword>
<keyword id="KW-0804">Transcription</keyword>
<keyword id="KW-0808">Transferase</keyword>
<keyword id="KW-0862">Zinc</keyword>
<organism>
    <name type="scientific">Prochlorococcus marinus (strain MIT 9211)</name>
    <dbReference type="NCBI Taxonomy" id="93059"/>
    <lineage>
        <taxon>Bacteria</taxon>
        <taxon>Bacillati</taxon>
        <taxon>Cyanobacteriota</taxon>
        <taxon>Cyanophyceae</taxon>
        <taxon>Synechococcales</taxon>
        <taxon>Prochlorococcaceae</taxon>
        <taxon>Prochlorococcus</taxon>
    </lineage>
</organism>
<evidence type="ECO:0000255" key="1">
    <source>
        <dbReference type="HAMAP-Rule" id="MF_01323"/>
    </source>
</evidence>
<sequence>MTNSNLRTENHFDYVKITLASPERVMSWGQRTLPNGQVVGEVTKPETINYRTLKPEMDGLFCEKIFGPSKDWECHCGKYKRVRHRGIVCERCGVEVTESRVRRHRMGFIKLAAPVSHVWYLKGIPSYVAILLDMPLRDVEQIVYFNCYVVLDQGDHKDLKYKQLLTEDEWLEIEDEIYAEDSTIENEPVVGIGAEALQQLLEDLDLKEIAETLREEITGSKGQKRAKLIKRLRVIDNFIATNARPEWMVLDAIPVIPPDLRPMVQLDGGRFATSDLNDLYRRVINRNNRLARLQEILAPEIIVRNEKRMLQEAVDALVDNGRRGRTVVGANNRALKSLSDIIEGKQGRFRQNLLGKRVDYSGRSVIVVGPKLKMHQCGLPKEMAIELFQPFVIHRLIRQNIVNNIKAAKKLIQRADDEVMQVLQEVIDGHPILLNRAPTLHRLGIQAFEPKLVDGRAIQLHPLVCPAFNADFDGDQMAVHVPLAIESQTEARMLMLASNNILSPATGEPIVTPSQDMVLGSYYLTAIQPEASKPDFGDQSKTFASLDDVINAFEDKRIKLHDWVWVRFNGEVDDDDHGEPSHSETLEDGTRIEQWNLRRDRLDEQGALISRFVLTTVGRVVMNHTIIDAVAIA</sequence>
<reference key="1">
    <citation type="journal article" date="2007" name="PLoS Genet.">
        <title>Patterns and implications of gene gain and loss in the evolution of Prochlorococcus.</title>
        <authorList>
            <person name="Kettler G.C."/>
            <person name="Martiny A.C."/>
            <person name="Huang K."/>
            <person name="Zucker J."/>
            <person name="Coleman M.L."/>
            <person name="Rodrigue S."/>
            <person name="Chen F."/>
            <person name="Lapidus A."/>
            <person name="Ferriera S."/>
            <person name="Johnson J."/>
            <person name="Steglich C."/>
            <person name="Church G.M."/>
            <person name="Richardson P."/>
            <person name="Chisholm S.W."/>
        </authorList>
    </citation>
    <scope>NUCLEOTIDE SEQUENCE [LARGE SCALE GENOMIC DNA]</scope>
    <source>
        <strain>MIT 9211</strain>
    </source>
</reference>
<feature type="chain" id="PRO_1000141806" description="DNA-directed RNA polymerase subunit gamma">
    <location>
        <begin position="1"/>
        <end position="633"/>
    </location>
</feature>
<feature type="binding site" evidence="1">
    <location>
        <position position="74"/>
    </location>
    <ligand>
        <name>Zn(2+)</name>
        <dbReference type="ChEBI" id="CHEBI:29105"/>
    </ligand>
</feature>
<feature type="binding site" evidence="1">
    <location>
        <position position="76"/>
    </location>
    <ligand>
        <name>Zn(2+)</name>
        <dbReference type="ChEBI" id="CHEBI:29105"/>
    </ligand>
</feature>
<feature type="binding site" evidence="1">
    <location>
        <position position="89"/>
    </location>
    <ligand>
        <name>Zn(2+)</name>
        <dbReference type="ChEBI" id="CHEBI:29105"/>
    </ligand>
</feature>
<feature type="binding site" evidence="1">
    <location>
        <position position="92"/>
    </location>
    <ligand>
        <name>Zn(2+)</name>
        <dbReference type="ChEBI" id="CHEBI:29105"/>
    </ligand>
</feature>
<feature type="binding site" evidence="1">
    <location>
        <position position="471"/>
    </location>
    <ligand>
        <name>Mg(2+)</name>
        <dbReference type="ChEBI" id="CHEBI:18420"/>
    </ligand>
</feature>
<feature type="binding site" evidence="1">
    <location>
        <position position="473"/>
    </location>
    <ligand>
        <name>Mg(2+)</name>
        <dbReference type="ChEBI" id="CHEBI:18420"/>
    </ligand>
</feature>
<feature type="binding site" evidence="1">
    <location>
        <position position="475"/>
    </location>
    <ligand>
        <name>Mg(2+)</name>
        <dbReference type="ChEBI" id="CHEBI:18420"/>
    </ligand>
</feature>
<accession>A9BCH5</accession>
<comment type="function">
    <text evidence="1">DNA-dependent RNA polymerase catalyzes the transcription of DNA into RNA using the four ribonucleoside triphosphates as substrates.</text>
</comment>
<comment type="catalytic activity">
    <reaction evidence="1">
        <text>RNA(n) + a ribonucleoside 5'-triphosphate = RNA(n+1) + diphosphate</text>
        <dbReference type="Rhea" id="RHEA:21248"/>
        <dbReference type="Rhea" id="RHEA-COMP:14527"/>
        <dbReference type="Rhea" id="RHEA-COMP:17342"/>
        <dbReference type="ChEBI" id="CHEBI:33019"/>
        <dbReference type="ChEBI" id="CHEBI:61557"/>
        <dbReference type="ChEBI" id="CHEBI:140395"/>
        <dbReference type="EC" id="2.7.7.6"/>
    </reaction>
</comment>
<comment type="cofactor">
    <cofactor evidence="1">
        <name>Mg(2+)</name>
        <dbReference type="ChEBI" id="CHEBI:18420"/>
    </cofactor>
    <text evidence="1">Binds 1 Mg(2+) ion per subunit.</text>
</comment>
<comment type="cofactor">
    <cofactor evidence="1">
        <name>Zn(2+)</name>
        <dbReference type="ChEBI" id="CHEBI:29105"/>
    </cofactor>
    <text evidence="1">Binds 1 Zn(2+) ion per subunit.</text>
</comment>
<comment type="subunit">
    <text evidence="1">In cyanobacteria the RNAP catalytic core is composed of 2 alpha, 1 beta, 1 beta', 1 gamma and 1 omega subunit. When a sigma factor is associated with the core the holoenzyme is formed, which can initiate transcription.</text>
</comment>
<comment type="similarity">
    <text evidence="1">Belongs to the RNA polymerase beta' chain family. RpoC1 subfamily.</text>
</comment>
<name>RPOC1_PROM4</name>